<protein>
    <recommendedName>
        <fullName evidence="4">Bacilliredoxin BrxA</fullName>
        <shortName evidence="4">Brx-A</shortName>
    </recommendedName>
    <alternativeName>
        <fullName evidence="5">Bacilliredoxin YphP</fullName>
    </alternativeName>
    <alternativeName>
        <fullName evidence="4">Dithiol bacilliredoxin</fullName>
    </alternativeName>
</protein>
<name>BRXA_BACSU</name>
<dbReference type="EMBL" id="L77246">
    <property type="protein sequence ID" value="AAA96630.1"/>
    <property type="molecule type" value="Genomic_DNA"/>
</dbReference>
<dbReference type="EMBL" id="AL009126">
    <property type="protein sequence ID" value="CAB14104.1"/>
    <property type="molecule type" value="Genomic_DNA"/>
</dbReference>
<dbReference type="PIR" id="D69936">
    <property type="entry name" value="D69936"/>
</dbReference>
<dbReference type="RefSeq" id="NP_390069.1">
    <property type="nucleotide sequence ID" value="NC_000964.3"/>
</dbReference>
<dbReference type="RefSeq" id="WP_003230794.1">
    <property type="nucleotide sequence ID" value="NZ_OZ025638.1"/>
</dbReference>
<dbReference type="PDB" id="3FHK">
    <property type="method" value="X-ray"/>
    <property type="resolution" value="2.30 A"/>
    <property type="chains" value="A/D/E/F=1-144"/>
</dbReference>
<dbReference type="PDBsum" id="3FHK"/>
<dbReference type="SMR" id="P54170"/>
<dbReference type="FunCoup" id="P54170">
    <property type="interactions" value="37"/>
</dbReference>
<dbReference type="STRING" id="224308.BSU21860"/>
<dbReference type="jPOST" id="P54170"/>
<dbReference type="PaxDb" id="224308-BSU21860"/>
<dbReference type="EnsemblBacteria" id="CAB14104">
    <property type="protein sequence ID" value="CAB14104"/>
    <property type="gene ID" value="BSU_21860"/>
</dbReference>
<dbReference type="GeneID" id="86873281"/>
<dbReference type="GeneID" id="939085"/>
<dbReference type="KEGG" id="bsu:BSU21860"/>
<dbReference type="PATRIC" id="fig|224308.179.peg.2388"/>
<dbReference type="eggNOG" id="ENOG502ZBVN">
    <property type="taxonomic scope" value="Bacteria"/>
</dbReference>
<dbReference type="InParanoid" id="P54170"/>
<dbReference type="OrthoDB" id="9793981at2"/>
<dbReference type="PhylomeDB" id="P54170"/>
<dbReference type="BioCyc" id="BSUB:BSU21860-MONOMER"/>
<dbReference type="EvolutionaryTrace" id="P54170"/>
<dbReference type="Proteomes" id="UP000001570">
    <property type="component" value="Chromosome"/>
</dbReference>
<dbReference type="GO" id="GO:0016491">
    <property type="term" value="F:oxidoreductase activity"/>
    <property type="evidence" value="ECO:0007669"/>
    <property type="project" value="UniProtKB-KW"/>
</dbReference>
<dbReference type="GO" id="GO:0003756">
    <property type="term" value="F:protein disulfide isomerase activity"/>
    <property type="evidence" value="ECO:0000315"/>
    <property type="project" value="UniProtKB"/>
</dbReference>
<dbReference type="GO" id="GO:0045454">
    <property type="term" value="P:cell redox homeostasis"/>
    <property type="evidence" value="ECO:0000315"/>
    <property type="project" value="UniProtKB"/>
</dbReference>
<dbReference type="GO" id="GO:0033194">
    <property type="term" value="P:response to hydroperoxide"/>
    <property type="evidence" value="ECO:0000270"/>
    <property type="project" value="UniProtKB"/>
</dbReference>
<dbReference type="GO" id="GO:0006979">
    <property type="term" value="P:response to oxidative stress"/>
    <property type="evidence" value="ECO:0000315"/>
    <property type="project" value="UniProtKB"/>
</dbReference>
<dbReference type="Gene3D" id="6.10.250.2150">
    <property type="match status" value="1"/>
</dbReference>
<dbReference type="Gene3D" id="3.40.30.10">
    <property type="entry name" value="Glutaredoxin"/>
    <property type="match status" value="1"/>
</dbReference>
<dbReference type="InterPro" id="IPR009474">
    <property type="entry name" value="BrxB/BrxA"/>
</dbReference>
<dbReference type="NCBIfam" id="TIGR04191">
    <property type="entry name" value="YphP_YqiW"/>
    <property type="match status" value="1"/>
</dbReference>
<dbReference type="PANTHER" id="PTHR40052:SF2">
    <property type="entry name" value="BACILLIREDOXIN BRXA"/>
    <property type="match status" value="1"/>
</dbReference>
<dbReference type="PANTHER" id="PTHR40052">
    <property type="entry name" value="UPF0403 PROTEIN YQIW-RELATED"/>
    <property type="match status" value="1"/>
</dbReference>
<dbReference type="Pfam" id="PF06491">
    <property type="entry name" value="Disulph_isomer"/>
    <property type="match status" value="1"/>
</dbReference>
<evidence type="ECO:0000269" key="1">
    <source>
    </source>
</evidence>
<evidence type="ECO:0000269" key="2">
    <source>
    </source>
</evidence>
<evidence type="ECO:0000303" key="3">
    <source>
    </source>
</evidence>
<evidence type="ECO:0000303" key="4">
    <source>
    </source>
</evidence>
<evidence type="ECO:0000305" key="5"/>
<evidence type="ECO:0000305" key="6">
    <source>
    </source>
</evidence>
<evidence type="ECO:0000305" key="7">
    <source>
    </source>
</evidence>
<evidence type="ECO:0000312" key="8">
    <source>
        <dbReference type="PDB" id="3FHK"/>
    </source>
</evidence>
<evidence type="ECO:0007829" key="9">
    <source>
        <dbReference type="PDB" id="3FHK"/>
    </source>
</evidence>
<accession>P54170</accession>
<comment type="function">
    <text evidence="1 2">S-bacillithiolation is the formation of mixed disulfide bonds between protein thiols and the general thiol reductant bacillithiol (BSH) under oxidative stress. BSH is an equivalent of glutathione (GSH) in Firmicutes. This protein is a dithiol bacilliredoxin, which debacillithiolates (removes BSH) the S-bacillithiolated OhrR (OhrR-SSB) in vitro and in vivo NaOCl-generated S-bacillithiolated MetE (MetE-SSB). Involved in maintaining redox homeostasis in response to disulfide stress conditions (PubMed:24313874). Has a redox potential of -130 mV. Displays weak protein disulfide isomerase activity in vitro (PubMed:19653655).</text>
</comment>
<comment type="induction">
    <text evidence="2">Expression is up-regulated by cumene hydroperoxide (CHP).</text>
</comment>
<comment type="PTM">
    <text evidence="2">N-terminal Cys of the CXC active site motif can react with bacillithiol (BSH) to form mixed disulfides. S-bacillithiolation protects Cys residues against overoxidation by acting as a redox switch in response to oxidative stress.</text>
</comment>
<comment type="disruption phenotype">
    <text evidence="2">Mild sensitivity to cumene hydroperoxide (CHP) as indicated by growth inhibition assay. No effect on growth after NaOCl treatment.</text>
</comment>
<comment type="similarity">
    <text evidence="7">Belongs to the bacilliredoxin family.</text>
</comment>
<gene>
    <name evidence="4" type="primary">brxA</name>
    <name evidence="3 4" type="synonym">yphP</name>
    <name type="ordered locus">BSU21860</name>
</gene>
<sequence>MSMAYEEYMRQLVVPMRRELTGAGFEELTTAEEVENFMEKAEGTTLVVVNSVCGCAAGLARPAATQAVLQNDKTPDNTVTVFAGQDKEATAKMREYFTGQEPSSPSMALLKGKEVVHFIPRHEIEGHDMEEIMKNLTAAFDAHC</sequence>
<organism>
    <name type="scientific">Bacillus subtilis (strain 168)</name>
    <dbReference type="NCBI Taxonomy" id="224308"/>
    <lineage>
        <taxon>Bacteria</taxon>
        <taxon>Bacillati</taxon>
        <taxon>Bacillota</taxon>
        <taxon>Bacilli</taxon>
        <taxon>Bacillales</taxon>
        <taxon>Bacillaceae</taxon>
        <taxon>Bacillus</taxon>
    </lineage>
</organism>
<feature type="chain" id="PRO_0000049698" description="Bacilliredoxin BrxA">
    <location>
        <begin position="1"/>
        <end position="144"/>
    </location>
</feature>
<feature type="short sequence motif" description="CXC active site motif" evidence="2 6">
    <location>
        <begin position="53"/>
        <end position="55"/>
    </location>
</feature>
<feature type="active site" description="Nucleophile" evidence="2">
    <location>
        <position position="53"/>
    </location>
</feature>
<feature type="active site" description="Nucleophile" evidence="2">
    <location>
        <position position="55"/>
    </location>
</feature>
<feature type="modified residue" description="S-bacillithiol cysteine disulfide" evidence="2">
    <location>
        <position position="53"/>
    </location>
</feature>
<feature type="disulfide bond" description="Redox-active" evidence="2">
    <location>
        <begin position="53"/>
        <end position="55"/>
    </location>
</feature>
<feature type="mutagenesis site" description="Loss of debacillithiolation of the S-bacillithiolated OhrR (OhrR-SSB) by the NaBH(4)-reduced form of this protein in vitro. Loss of debacillithiolation of in vivo NaOCl-generated S-bacillithiolated MetE (MetE-SSB). Retains isomerization activity of the disulfide bonds in scrambled tachyplesin substrate. Loss of isomerization activity; when associated with A-55." evidence="1 2">
    <original>C</original>
    <variation>A</variation>
    <location>
        <position position="53"/>
    </location>
</feature>
<feature type="mutagenesis site" description="Accumulation of S-bacillithiolated form due to lack of this resolving cysteine residue. Debacillithiolation of the S-bacillithiolated OhrR (OhrR-SSB) without the prior NaBH(4) reduction of this protein in vitro. Debacillithiolation of in vivo NaOCl-generated S-bacillithiolated MetE (MetE-SSB). Retains isomerization activity of the disulfide bonds in scrambled tachyplesin substrate. Loss of isomerization activity; when associated with A-53." evidence="1 2">
    <original>C</original>
    <variation>A</variation>
    <location>
        <position position="55"/>
    </location>
</feature>
<feature type="helix" evidence="9">
    <location>
        <begin position="1"/>
        <end position="21"/>
    </location>
</feature>
<feature type="turn" evidence="9">
    <location>
        <begin position="22"/>
        <end position="24"/>
    </location>
</feature>
<feature type="helix" evidence="9">
    <location>
        <begin position="31"/>
        <end position="40"/>
    </location>
</feature>
<feature type="strand" evidence="9">
    <location>
        <begin position="43"/>
        <end position="50"/>
    </location>
</feature>
<feature type="helix" evidence="9">
    <location>
        <begin position="54"/>
        <end position="58"/>
    </location>
</feature>
<feature type="helix" evidence="9">
    <location>
        <begin position="60"/>
        <end position="70"/>
    </location>
</feature>
<feature type="strand" evidence="9">
    <location>
        <begin position="76"/>
        <end position="82"/>
    </location>
</feature>
<feature type="turn" evidence="9">
    <location>
        <begin position="83"/>
        <end position="85"/>
    </location>
</feature>
<feature type="helix" evidence="9">
    <location>
        <begin position="87"/>
        <end position="94"/>
    </location>
</feature>
<feature type="strand" evidence="9">
    <location>
        <begin position="104"/>
        <end position="111"/>
    </location>
</feature>
<feature type="strand" evidence="9">
    <location>
        <begin position="114"/>
        <end position="119"/>
    </location>
</feature>
<feature type="helix" evidence="9">
    <location>
        <begin position="121"/>
        <end position="123"/>
    </location>
</feature>
<feature type="turn" evidence="9">
    <location>
        <begin position="124"/>
        <end position="126"/>
    </location>
</feature>
<feature type="helix" evidence="9">
    <location>
        <begin position="129"/>
        <end position="143"/>
    </location>
</feature>
<proteinExistence type="evidence at protein level"/>
<keyword id="KW-0002">3D-structure</keyword>
<keyword id="KW-0903">Direct protein sequencing</keyword>
<keyword id="KW-1015">Disulfide bond</keyword>
<keyword id="KW-0560">Oxidoreductase</keyword>
<keyword id="KW-0676">Redox-active center</keyword>
<keyword id="KW-1185">Reference proteome</keyword>
<reference key="1">
    <citation type="journal article" date="1996" name="Microbiology">
        <title>Organization of the Bacillus subtilis 168 chromosome between kdg and the attachment site of the SP beta prophage: use of long accurate PCR and yeast artificial chromosomes for sequencing.</title>
        <authorList>
            <person name="Capuano V."/>
            <person name="Galleron N."/>
            <person name="Pujic P."/>
            <person name="Sorokin A."/>
            <person name="Ehrlich S.D."/>
        </authorList>
    </citation>
    <scope>NUCLEOTIDE SEQUENCE [GENOMIC DNA]</scope>
    <source>
        <strain>168 / Marburg / ATCC 6051 / DSM 10 / JCM 1465 / NBRC 13719 / NCIMB 3610 / NRRL NRS-744 / VKM B-501</strain>
    </source>
</reference>
<reference key="2">
    <citation type="journal article" date="1997" name="Nature">
        <title>The complete genome sequence of the Gram-positive bacterium Bacillus subtilis.</title>
        <authorList>
            <person name="Kunst F."/>
            <person name="Ogasawara N."/>
            <person name="Moszer I."/>
            <person name="Albertini A.M."/>
            <person name="Alloni G."/>
            <person name="Azevedo V."/>
            <person name="Bertero M.G."/>
            <person name="Bessieres P."/>
            <person name="Bolotin A."/>
            <person name="Borchert S."/>
            <person name="Borriss R."/>
            <person name="Boursier L."/>
            <person name="Brans A."/>
            <person name="Braun M."/>
            <person name="Brignell S.C."/>
            <person name="Bron S."/>
            <person name="Brouillet S."/>
            <person name="Bruschi C.V."/>
            <person name="Caldwell B."/>
            <person name="Capuano V."/>
            <person name="Carter N.M."/>
            <person name="Choi S.-K."/>
            <person name="Codani J.-J."/>
            <person name="Connerton I.F."/>
            <person name="Cummings N.J."/>
            <person name="Daniel R.A."/>
            <person name="Denizot F."/>
            <person name="Devine K.M."/>
            <person name="Duesterhoeft A."/>
            <person name="Ehrlich S.D."/>
            <person name="Emmerson P.T."/>
            <person name="Entian K.-D."/>
            <person name="Errington J."/>
            <person name="Fabret C."/>
            <person name="Ferrari E."/>
            <person name="Foulger D."/>
            <person name="Fritz C."/>
            <person name="Fujita M."/>
            <person name="Fujita Y."/>
            <person name="Fuma S."/>
            <person name="Galizzi A."/>
            <person name="Galleron N."/>
            <person name="Ghim S.-Y."/>
            <person name="Glaser P."/>
            <person name="Goffeau A."/>
            <person name="Golightly E.J."/>
            <person name="Grandi G."/>
            <person name="Guiseppi G."/>
            <person name="Guy B.J."/>
            <person name="Haga K."/>
            <person name="Haiech J."/>
            <person name="Harwood C.R."/>
            <person name="Henaut A."/>
            <person name="Hilbert H."/>
            <person name="Holsappel S."/>
            <person name="Hosono S."/>
            <person name="Hullo M.-F."/>
            <person name="Itaya M."/>
            <person name="Jones L.-M."/>
            <person name="Joris B."/>
            <person name="Karamata D."/>
            <person name="Kasahara Y."/>
            <person name="Klaerr-Blanchard M."/>
            <person name="Klein C."/>
            <person name="Kobayashi Y."/>
            <person name="Koetter P."/>
            <person name="Koningstein G."/>
            <person name="Krogh S."/>
            <person name="Kumano M."/>
            <person name="Kurita K."/>
            <person name="Lapidus A."/>
            <person name="Lardinois S."/>
            <person name="Lauber J."/>
            <person name="Lazarevic V."/>
            <person name="Lee S.-M."/>
            <person name="Levine A."/>
            <person name="Liu H."/>
            <person name="Masuda S."/>
            <person name="Mauel C."/>
            <person name="Medigue C."/>
            <person name="Medina N."/>
            <person name="Mellado R.P."/>
            <person name="Mizuno M."/>
            <person name="Moestl D."/>
            <person name="Nakai S."/>
            <person name="Noback M."/>
            <person name="Noone D."/>
            <person name="O'Reilly M."/>
            <person name="Ogawa K."/>
            <person name="Ogiwara A."/>
            <person name="Oudega B."/>
            <person name="Park S.-H."/>
            <person name="Parro V."/>
            <person name="Pohl T.M."/>
            <person name="Portetelle D."/>
            <person name="Porwollik S."/>
            <person name="Prescott A.M."/>
            <person name="Presecan E."/>
            <person name="Pujic P."/>
            <person name="Purnelle B."/>
            <person name="Rapoport G."/>
            <person name="Rey M."/>
            <person name="Reynolds S."/>
            <person name="Rieger M."/>
            <person name="Rivolta C."/>
            <person name="Rocha E."/>
            <person name="Roche B."/>
            <person name="Rose M."/>
            <person name="Sadaie Y."/>
            <person name="Sato T."/>
            <person name="Scanlan E."/>
            <person name="Schleich S."/>
            <person name="Schroeter R."/>
            <person name="Scoffone F."/>
            <person name="Sekiguchi J."/>
            <person name="Sekowska A."/>
            <person name="Seror S.J."/>
            <person name="Serror P."/>
            <person name="Shin B.-S."/>
            <person name="Soldo B."/>
            <person name="Sorokin A."/>
            <person name="Tacconi E."/>
            <person name="Takagi T."/>
            <person name="Takahashi H."/>
            <person name="Takemaru K."/>
            <person name="Takeuchi M."/>
            <person name="Tamakoshi A."/>
            <person name="Tanaka T."/>
            <person name="Terpstra P."/>
            <person name="Tognoni A."/>
            <person name="Tosato V."/>
            <person name="Uchiyama S."/>
            <person name="Vandenbol M."/>
            <person name="Vannier F."/>
            <person name="Vassarotti A."/>
            <person name="Viari A."/>
            <person name="Wambutt R."/>
            <person name="Wedler E."/>
            <person name="Wedler H."/>
            <person name="Weitzenegger T."/>
            <person name="Winters P."/>
            <person name="Wipat A."/>
            <person name="Yamamoto H."/>
            <person name="Yamane K."/>
            <person name="Yasumoto K."/>
            <person name="Yata K."/>
            <person name="Yoshida K."/>
            <person name="Yoshikawa H.-F."/>
            <person name="Zumstein E."/>
            <person name="Yoshikawa H."/>
            <person name="Danchin A."/>
        </authorList>
    </citation>
    <scope>NUCLEOTIDE SEQUENCE [LARGE SCALE GENOMIC DNA]</scope>
    <source>
        <strain>168</strain>
    </source>
</reference>
<reference key="3">
    <citation type="journal article" date="2014" name="Antioxid. Redox Signal.">
        <title>Redox regulation in Bacillus subtilis: The bacilliredoxins BrxA(YphP) and BrxB(YqiW) function in de-bacillithiolation of S-bacillithiolated OhrR and MetE.</title>
        <authorList>
            <person name="Gaballa A."/>
            <person name="Chi B.K."/>
            <person name="Roberts A.A."/>
            <person name="Becher D."/>
            <person name="Hamilton C.J."/>
            <person name="Antelmann H."/>
            <person name="Helmann J.D."/>
        </authorList>
    </citation>
    <scope>PROTEIN SEQUENCE OF 41-61</scope>
    <scope>FUNCTION</scope>
    <scope>INDUCTION</scope>
    <scope>PTM</scope>
    <scope>IDENTIFICATION BY MASS SPECTROMETRY</scope>
    <scope>DISRUPTION PHENOTYPE</scope>
    <scope>MOTIF</scope>
    <scope>ACTIVE SITE</scope>
    <scope>POST-TRANSLATIONAL MODIFICATION AT CYS-53</scope>
    <scope>DISULFIDE BOND</scope>
    <scope>MUTAGENESIS OF CYS-53 AND CYS-55</scope>
</reference>
<reference evidence="8" key="4">
    <citation type="journal article" date="2009" name="Biochemistry">
        <title>Structure and function of Bacillus subtilis YphP, a prokaryotic disulfide isomerase with a CXC catalytic motif.</title>
        <authorList>
            <person name="Derewenda U."/>
            <person name="Boczek T."/>
            <person name="Gorres K.L."/>
            <person name="Yu M."/>
            <person name="Hung L.W."/>
            <person name="Cooper D."/>
            <person name="Joachimiak A."/>
            <person name="Raines R.T."/>
            <person name="Derewenda Z.S."/>
        </authorList>
    </citation>
    <scope>X-RAY CRYSTALLOGRAPHY (2.3 ANGSTROMS) OF ALA-100/ALA-101 MUTANT</scope>
    <scope>FUNCTION</scope>
    <scope>MOTIF</scope>
    <scope>MUTAGENESIS OF CYS-53 AND CYS-55</scope>
    <scope>REACTION MECHANISM OF THE PROTEIN DISULFIDE ISOMERASE ACTIVITY</scope>
</reference>